<proteinExistence type="inferred from homology"/>
<sequence length="391" mass="42412">MFKSPFGANANPFGGASDGATVGGNAMHQVIEEEENDTVTSPTSPNFGMNAQSMFSGPFGGDASDDVLPSALRSPPNPESYPAQYNFSRRTSVSAESLKPSADTYDNWTPPVHDKTNEQLSRLKTAIAGNFLFSHLDDEQSAQILGALIEKPIPAKDIKVISQGDAGDYFYVVEKGSFDVYVNEKGTLQPGPEGMGEKVGTIQAGGSFGELALMYNAPRAATVISAEPGCTLWALDRLTFRRILMESTFSRRRMYEDFLREVPLLQTLTPYERSKIADALETQKYTPGATIIKEGDPGHSFYLLESGEADAYLGDGKESVKHYSKGDFFGELALLNDAPRAASIVATTDVKVASLGKSAFQRLLGPVEGIMRRTKYDDIKTGVEEMDPLQV</sequence>
<feature type="chain" id="PRO_0000205409" description="cAMP-dependent protein kinase regulatory subunit">
    <location>
        <begin position="1"/>
        <end position="391"/>
    </location>
</feature>
<feature type="region of interest" description="Dimerization and phosphorylation" evidence="2">
    <location>
        <begin position="1"/>
        <end position="131"/>
    </location>
</feature>
<feature type="region of interest" description="Disordered" evidence="3">
    <location>
        <begin position="1"/>
        <end position="84"/>
    </location>
</feature>
<feature type="compositionally biased region" description="Polar residues" evidence="3">
    <location>
        <begin position="38"/>
        <end position="55"/>
    </location>
</feature>
<feature type="binding site">
    <location>
        <begin position="132"/>
        <end position="261"/>
    </location>
    <ligand>
        <name>3',5'-cyclic AMP</name>
        <dbReference type="ChEBI" id="CHEBI:58165"/>
        <label>1</label>
    </ligand>
</feature>
<feature type="binding site" evidence="1">
    <location>
        <position position="210"/>
    </location>
    <ligand>
        <name>3',5'-cyclic AMP</name>
        <dbReference type="ChEBI" id="CHEBI:58165"/>
        <label>1</label>
    </ligand>
</feature>
<feature type="binding site" evidence="1">
    <location>
        <position position="219"/>
    </location>
    <ligand>
        <name>3',5'-cyclic AMP</name>
        <dbReference type="ChEBI" id="CHEBI:58165"/>
        <label>1</label>
    </ligand>
</feature>
<feature type="binding site">
    <location>
        <begin position="264"/>
        <end position="381"/>
    </location>
    <ligand>
        <name>3',5'-cyclic AMP</name>
        <dbReference type="ChEBI" id="CHEBI:58165"/>
        <label>2</label>
    </ligand>
</feature>
<feature type="binding site" evidence="1">
    <location>
        <position position="331"/>
    </location>
    <ligand>
        <name>3',5'-cyclic AMP</name>
        <dbReference type="ChEBI" id="CHEBI:58165"/>
        <label>2</label>
    </ligand>
</feature>
<feature type="binding site" evidence="1">
    <location>
        <position position="340"/>
    </location>
    <ligand>
        <name>3',5'-cyclic AMP</name>
        <dbReference type="ChEBI" id="CHEBI:58165"/>
        <label>2</label>
    </ligand>
</feature>
<feature type="modified residue" description="Phosphoserine" evidence="1">
    <location>
        <position position="92"/>
    </location>
</feature>
<comment type="subunit">
    <text evidence="1">Tetramer, composed of 2 regulatory (R) and 2 catalytic (C) subunits. In the presence of cAMP it dissociates into 2 active monomeric C subunits and an R dimer (By similarity).</text>
</comment>
<comment type="similarity">
    <text evidence="4">Belongs to the cAMP-dependent kinase regulatory chain family.</text>
</comment>
<protein>
    <recommendedName>
        <fullName>cAMP-dependent protein kinase regulatory subunit</fullName>
        <shortName>PKA regulatory subunit</shortName>
    </recommendedName>
</protein>
<keyword id="KW-0114">cAMP</keyword>
<keyword id="KW-0116">cAMP-binding</keyword>
<keyword id="KW-0547">Nucleotide-binding</keyword>
<keyword id="KW-0597">Phosphoprotein</keyword>
<keyword id="KW-1185">Reference proteome</keyword>
<keyword id="KW-0677">Repeat</keyword>
<dbReference type="EMBL" id="AF353397">
    <property type="protein sequence ID" value="AAK31209.1"/>
    <property type="molecule type" value="Genomic_DNA"/>
</dbReference>
<dbReference type="EMBL" id="KB725947">
    <property type="protein sequence ID" value="ENH81822.1"/>
    <property type="molecule type" value="Genomic_DNA"/>
</dbReference>
<dbReference type="EMBL" id="AMCV02000001">
    <property type="protein sequence ID" value="TDZ26072.1"/>
    <property type="molecule type" value="Genomic_DNA"/>
</dbReference>
<dbReference type="SMR" id="Q9C1C2"/>
<dbReference type="STRING" id="1213857.Q9C1C2"/>
<dbReference type="EnsemblFungi" id="ENH81822">
    <property type="protein sequence ID" value="ENH81822"/>
    <property type="gene ID" value="Cob_09468"/>
</dbReference>
<dbReference type="eggNOG" id="KOG1113">
    <property type="taxonomic scope" value="Eukaryota"/>
</dbReference>
<dbReference type="HOGENOM" id="CLU_018310_0_0_1"/>
<dbReference type="OrthoDB" id="417078at2759"/>
<dbReference type="PHI-base" id="PHI:231"/>
<dbReference type="Proteomes" id="UP000014480">
    <property type="component" value="Unassembled WGS sequence"/>
</dbReference>
<dbReference type="GO" id="GO:0005952">
    <property type="term" value="C:cAMP-dependent protein kinase complex"/>
    <property type="evidence" value="ECO:0007669"/>
    <property type="project" value="InterPro"/>
</dbReference>
<dbReference type="GO" id="GO:0005829">
    <property type="term" value="C:cytosol"/>
    <property type="evidence" value="ECO:0007669"/>
    <property type="project" value="TreeGrafter"/>
</dbReference>
<dbReference type="GO" id="GO:0005634">
    <property type="term" value="C:nucleus"/>
    <property type="evidence" value="ECO:0007669"/>
    <property type="project" value="TreeGrafter"/>
</dbReference>
<dbReference type="GO" id="GO:0030552">
    <property type="term" value="F:cAMP binding"/>
    <property type="evidence" value="ECO:0007669"/>
    <property type="project" value="UniProtKB-KW"/>
</dbReference>
<dbReference type="GO" id="GO:0004862">
    <property type="term" value="F:cAMP-dependent protein kinase inhibitor activity"/>
    <property type="evidence" value="ECO:0007669"/>
    <property type="project" value="TreeGrafter"/>
</dbReference>
<dbReference type="GO" id="GO:0034236">
    <property type="term" value="F:protein kinase A catalytic subunit binding"/>
    <property type="evidence" value="ECO:0007669"/>
    <property type="project" value="TreeGrafter"/>
</dbReference>
<dbReference type="CDD" id="cd00038">
    <property type="entry name" value="CAP_ED"/>
    <property type="match status" value="2"/>
</dbReference>
<dbReference type="FunFam" id="2.60.120.10:FF:000039">
    <property type="entry name" value="cAMP-dependent protein kinase regulatory subunit"/>
    <property type="match status" value="1"/>
</dbReference>
<dbReference type="FunFam" id="2.60.120.10:FF:000006">
    <property type="entry name" value="cAMP-dependent protein kinase type I-alpha regulatory subunit"/>
    <property type="match status" value="1"/>
</dbReference>
<dbReference type="Gene3D" id="2.60.120.10">
    <property type="entry name" value="Jelly Rolls"/>
    <property type="match status" value="2"/>
</dbReference>
<dbReference type="InterPro" id="IPR050503">
    <property type="entry name" value="cAMP-dep_PK_reg_su-like"/>
</dbReference>
<dbReference type="InterPro" id="IPR012198">
    <property type="entry name" value="cAMP_dep_PK_reg_su"/>
</dbReference>
<dbReference type="InterPro" id="IPR018488">
    <property type="entry name" value="cNMP-bd_CS"/>
</dbReference>
<dbReference type="InterPro" id="IPR000595">
    <property type="entry name" value="cNMP-bd_dom"/>
</dbReference>
<dbReference type="InterPro" id="IPR018490">
    <property type="entry name" value="cNMP-bd_dom_sf"/>
</dbReference>
<dbReference type="InterPro" id="IPR014710">
    <property type="entry name" value="RmlC-like_jellyroll"/>
</dbReference>
<dbReference type="PANTHER" id="PTHR11635">
    <property type="entry name" value="CAMP-DEPENDENT PROTEIN KINASE REGULATORY CHAIN"/>
    <property type="match status" value="1"/>
</dbReference>
<dbReference type="PANTHER" id="PTHR11635:SF152">
    <property type="entry name" value="CAMP-DEPENDENT PROTEIN KINASE TYPE I REGULATORY SUBUNIT-RELATED"/>
    <property type="match status" value="1"/>
</dbReference>
<dbReference type="Pfam" id="PF00027">
    <property type="entry name" value="cNMP_binding"/>
    <property type="match status" value="2"/>
</dbReference>
<dbReference type="PIRSF" id="PIRSF000548">
    <property type="entry name" value="PK_regulatory"/>
    <property type="match status" value="1"/>
</dbReference>
<dbReference type="PRINTS" id="PR00103">
    <property type="entry name" value="CAMPKINASE"/>
</dbReference>
<dbReference type="SMART" id="SM00100">
    <property type="entry name" value="cNMP"/>
    <property type="match status" value="2"/>
</dbReference>
<dbReference type="SUPFAM" id="SSF51206">
    <property type="entry name" value="cAMP-binding domain-like"/>
    <property type="match status" value="2"/>
</dbReference>
<dbReference type="PROSITE" id="PS00888">
    <property type="entry name" value="CNMP_BINDING_1"/>
    <property type="match status" value="2"/>
</dbReference>
<dbReference type="PROSITE" id="PS00889">
    <property type="entry name" value="CNMP_BINDING_2"/>
    <property type="match status" value="2"/>
</dbReference>
<dbReference type="PROSITE" id="PS50042">
    <property type="entry name" value="CNMP_BINDING_3"/>
    <property type="match status" value="2"/>
</dbReference>
<accession>Q9C1C2</accession>
<accession>A0A484G732</accession>
<accession>N4VDJ5</accession>
<name>KAPR_COLOR</name>
<organism>
    <name type="scientific">Colletotrichum orbiculare (strain 104-T / ATCC 96160 / CBS 514.97 / LARS 414 / MAFF 240422)</name>
    <name type="common">Cucumber anthracnose fungus</name>
    <name type="synonym">Colletotrichum lagenarium</name>
    <dbReference type="NCBI Taxonomy" id="1213857"/>
    <lineage>
        <taxon>Eukaryota</taxon>
        <taxon>Fungi</taxon>
        <taxon>Dikarya</taxon>
        <taxon>Ascomycota</taxon>
        <taxon>Pezizomycotina</taxon>
        <taxon>Sordariomycetes</taxon>
        <taxon>Hypocreomycetidae</taxon>
        <taxon>Glomerellales</taxon>
        <taxon>Glomerellaceae</taxon>
        <taxon>Colletotrichum</taxon>
        <taxon>Colletotrichum orbiculare species complex</taxon>
    </lineage>
</organism>
<reference key="1">
    <citation type="journal article" date="2001" name="Mol. Plant Microbe Interact.">
        <title>Proper regulation of cyclic AMP-dependent protein kinase is required for growth, conidiation, and appressorium function in the anthracnose fungus Colletotrichum lagenarium.</title>
        <authorList>
            <person name="Takano Y."/>
            <person name="Komeda K."/>
            <person name="Kojima K."/>
            <person name="Okuno T."/>
        </authorList>
    </citation>
    <scope>NUCLEOTIDE SEQUENCE [GENOMIC DNA]</scope>
    <source>
        <strain>104-T / ATCC 96160 / CBS 514.97 / LARS 414 / MAFF 240422</strain>
    </source>
</reference>
<reference key="2">
    <citation type="journal article" date="2013" name="New Phytol.">
        <title>Comparative genomic and transcriptomic analyses reveal the hemibiotrophic stage shift of Colletotrichum fungi.</title>
        <authorList>
            <person name="Gan P."/>
            <person name="Ikeda K."/>
            <person name="Irieda H."/>
            <person name="Narusaka M."/>
            <person name="O'Connell R.J."/>
            <person name="Narusaka Y."/>
            <person name="Takano Y."/>
            <person name="Kubo Y."/>
            <person name="Shirasu K."/>
        </authorList>
    </citation>
    <scope>NUCLEOTIDE SEQUENCE [LARGE SCALE GENOMIC DNA]</scope>
    <source>
        <strain>104-T / ATCC 96160 / CBS 514.97 / LARS 414 / MAFF 240422</strain>
    </source>
</reference>
<reference key="3">
    <citation type="journal article" date="2019" name="Mol. Plant Microbe Interact.">
        <title>Genome sequence resources for four phytopathogenic fungi from the Colletotrichum orbiculare species complex.</title>
        <authorList>
            <person name="Gan P."/>
            <person name="Tsushima A."/>
            <person name="Narusaka M."/>
            <person name="Narusaka Y."/>
            <person name="Takano Y."/>
            <person name="Kubo Y."/>
            <person name="Shirasu K."/>
        </authorList>
    </citation>
    <scope>GENOME REANNOTATION</scope>
    <source>
        <strain>104-T / ATCC 96160 / CBS 514.97 / LARS 414 / MAFF 240422</strain>
    </source>
</reference>
<evidence type="ECO:0000250" key="1"/>
<evidence type="ECO:0000255" key="2"/>
<evidence type="ECO:0000256" key="3">
    <source>
        <dbReference type="SAM" id="MobiDB-lite"/>
    </source>
</evidence>
<evidence type="ECO:0000305" key="4"/>
<gene>
    <name type="primary">PKAR</name>
    <name type="synonym">RPK1</name>
    <name type="ORF">Cob_09468</name>
    <name type="ORF">Cob_v000201</name>
</gene>